<comment type="function">
    <text evidence="1">Catalyzes the attachment of proline to tRNA(Pro) in a two-step reaction: proline is first activated by ATP to form Pro-AMP and then transferred to the acceptor end of tRNA(Pro). As ProRS can inadvertently accommodate and process non-cognate amino acids such as alanine and cysteine, to avoid such errors it has two additional distinct editing activities against alanine. One activity is designated as 'pretransfer' editing and involves the tRNA(Pro)-independent hydrolysis of activated Ala-AMP. The other activity is designated 'posttransfer' editing and involves deacylation of mischarged Ala-tRNA(Pro). The misacylated Cys-tRNA(Pro) is not edited by ProRS.</text>
</comment>
<comment type="catalytic activity">
    <reaction evidence="1">
        <text>tRNA(Pro) + L-proline + ATP = L-prolyl-tRNA(Pro) + AMP + diphosphate</text>
        <dbReference type="Rhea" id="RHEA:14305"/>
        <dbReference type="Rhea" id="RHEA-COMP:9700"/>
        <dbReference type="Rhea" id="RHEA-COMP:9702"/>
        <dbReference type="ChEBI" id="CHEBI:30616"/>
        <dbReference type="ChEBI" id="CHEBI:33019"/>
        <dbReference type="ChEBI" id="CHEBI:60039"/>
        <dbReference type="ChEBI" id="CHEBI:78442"/>
        <dbReference type="ChEBI" id="CHEBI:78532"/>
        <dbReference type="ChEBI" id="CHEBI:456215"/>
        <dbReference type="EC" id="6.1.1.15"/>
    </reaction>
</comment>
<comment type="subunit">
    <text evidence="1">Homodimer.</text>
</comment>
<comment type="subcellular location">
    <subcellularLocation>
        <location evidence="1">Cytoplasm</location>
    </subcellularLocation>
</comment>
<comment type="domain">
    <text evidence="1">Consists of three domains: the N-terminal catalytic domain, the editing domain and the C-terminal anticodon-binding domain.</text>
</comment>
<comment type="similarity">
    <text evidence="1">Belongs to the class-II aminoacyl-tRNA synthetase family. ProS type 1 subfamily.</text>
</comment>
<evidence type="ECO:0000255" key="1">
    <source>
        <dbReference type="HAMAP-Rule" id="MF_01569"/>
    </source>
</evidence>
<sequence length="571" mass="64007">MKQSKILISTVKEVPNDAEVLSHKMMLRAGYIRQISAGMYAYLPLAYKVISKIEKIVREEMEAIDAVEMLTPAVLPAELWKQSGRYETYGQELYKFKNRHDRDFILGPTHEETMTTLIRDEVKSYKKLPLSLYQIQMKYRDEDRPRYGLLRGREFLMKDAYSFHADEETLDQSFRDFEKAYQNIFRRCGLNFREIVGDAGAMGGRDSKEFSAIASIGEDTIAYSEESDYAANLEMASSVYTDLQMHENQEELTKVATDDAHSIDEVAAKLDVDSNRLIKTMVLIVDEAPVLALLRGNDQLNEVKLTNLLHADEVREATEEEAFELLGAHVGSLGPVLENKPENLKIVADKYIEQMVNSVVGANEDGFHLKNVNVERDFTVDEYADIRTVREGELAPDGKGALKFTKGIEIGHIFKIGTKYSEALDAKVLDENGRAIPVIMGCYGIGVSRLLSAVSEQQSDENGLVWPKNIAPYDVHVIPVNAKNAEQMEIADQINGELTKAGYDVLVDDRKERAGVKFADSDLIGIPLRVTIGKKASEGIVEVKLRKTGEAVEVKVAELNNTVEILLNQAQ</sequence>
<gene>
    <name evidence="1" type="primary">proS</name>
    <name type="ordered locus">PEPE_0884</name>
</gene>
<proteinExistence type="inferred from homology"/>
<feature type="chain" id="PRO_0000288359" description="Proline--tRNA ligase">
    <location>
        <begin position="1"/>
        <end position="571"/>
    </location>
</feature>
<dbReference type="EC" id="6.1.1.15" evidence="1"/>
<dbReference type="EMBL" id="CP000422">
    <property type="protein sequence ID" value="ABJ67943.1"/>
    <property type="molecule type" value="Genomic_DNA"/>
</dbReference>
<dbReference type="RefSeq" id="WP_011673319.1">
    <property type="nucleotide sequence ID" value="NC_008525.1"/>
</dbReference>
<dbReference type="SMR" id="Q03FS9"/>
<dbReference type="STRING" id="278197.PEPE_0884"/>
<dbReference type="GeneID" id="33062645"/>
<dbReference type="KEGG" id="ppe:PEPE_0884"/>
<dbReference type="eggNOG" id="COG0442">
    <property type="taxonomic scope" value="Bacteria"/>
</dbReference>
<dbReference type="HOGENOM" id="CLU_016739_0_0_9"/>
<dbReference type="OrthoDB" id="9809052at2"/>
<dbReference type="Proteomes" id="UP000000773">
    <property type="component" value="Chromosome"/>
</dbReference>
<dbReference type="GO" id="GO:0005829">
    <property type="term" value="C:cytosol"/>
    <property type="evidence" value="ECO:0007669"/>
    <property type="project" value="TreeGrafter"/>
</dbReference>
<dbReference type="GO" id="GO:0002161">
    <property type="term" value="F:aminoacyl-tRNA deacylase activity"/>
    <property type="evidence" value="ECO:0007669"/>
    <property type="project" value="InterPro"/>
</dbReference>
<dbReference type="GO" id="GO:0005524">
    <property type="term" value="F:ATP binding"/>
    <property type="evidence" value="ECO:0007669"/>
    <property type="project" value="UniProtKB-UniRule"/>
</dbReference>
<dbReference type="GO" id="GO:0140096">
    <property type="term" value="F:catalytic activity, acting on a protein"/>
    <property type="evidence" value="ECO:0007669"/>
    <property type="project" value="UniProtKB-ARBA"/>
</dbReference>
<dbReference type="GO" id="GO:0004827">
    <property type="term" value="F:proline-tRNA ligase activity"/>
    <property type="evidence" value="ECO:0007669"/>
    <property type="project" value="UniProtKB-UniRule"/>
</dbReference>
<dbReference type="GO" id="GO:0016740">
    <property type="term" value="F:transferase activity"/>
    <property type="evidence" value="ECO:0007669"/>
    <property type="project" value="UniProtKB-ARBA"/>
</dbReference>
<dbReference type="GO" id="GO:0006433">
    <property type="term" value="P:prolyl-tRNA aminoacylation"/>
    <property type="evidence" value="ECO:0007669"/>
    <property type="project" value="UniProtKB-UniRule"/>
</dbReference>
<dbReference type="CDD" id="cd04334">
    <property type="entry name" value="ProRS-INS"/>
    <property type="match status" value="1"/>
</dbReference>
<dbReference type="CDD" id="cd00861">
    <property type="entry name" value="ProRS_anticodon_short"/>
    <property type="match status" value="1"/>
</dbReference>
<dbReference type="CDD" id="cd00779">
    <property type="entry name" value="ProRS_core_prok"/>
    <property type="match status" value="1"/>
</dbReference>
<dbReference type="FunFam" id="3.40.50.800:FF:000011">
    <property type="entry name" value="Proline--tRNA ligase"/>
    <property type="match status" value="1"/>
</dbReference>
<dbReference type="Gene3D" id="3.40.50.800">
    <property type="entry name" value="Anticodon-binding domain"/>
    <property type="match status" value="1"/>
</dbReference>
<dbReference type="Gene3D" id="3.30.930.10">
    <property type="entry name" value="Bira Bifunctional Protein, Domain 2"/>
    <property type="match status" value="2"/>
</dbReference>
<dbReference type="HAMAP" id="MF_01569">
    <property type="entry name" value="Pro_tRNA_synth_type1"/>
    <property type="match status" value="1"/>
</dbReference>
<dbReference type="InterPro" id="IPR002314">
    <property type="entry name" value="aa-tRNA-synt_IIb"/>
</dbReference>
<dbReference type="InterPro" id="IPR006195">
    <property type="entry name" value="aa-tRNA-synth_II"/>
</dbReference>
<dbReference type="InterPro" id="IPR045864">
    <property type="entry name" value="aa-tRNA-synth_II/BPL/LPL"/>
</dbReference>
<dbReference type="InterPro" id="IPR004154">
    <property type="entry name" value="Anticodon-bd"/>
</dbReference>
<dbReference type="InterPro" id="IPR036621">
    <property type="entry name" value="Anticodon-bd_dom_sf"/>
</dbReference>
<dbReference type="InterPro" id="IPR002316">
    <property type="entry name" value="Pro-tRNA-ligase_IIa"/>
</dbReference>
<dbReference type="InterPro" id="IPR004500">
    <property type="entry name" value="Pro-tRNA-synth_IIa_bac-type"/>
</dbReference>
<dbReference type="InterPro" id="IPR023717">
    <property type="entry name" value="Pro-tRNA-Synthase_IIa_type1"/>
</dbReference>
<dbReference type="InterPro" id="IPR050062">
    <property type="entry name" value="Pro-tRNA_synthetase"/>
</dbReference>
<dbReference type="InterPro" id="IPR044140">
    <property type="entry name" value="ProRS_anticodon_short"/>
</dbReference>
<dbReference type="InterPro" id="IPR033730">
    <property type="entry name" value="ProRS_core_prok"/>
</dbReference>
<dbReference type="InterPro" id="IPR036754">
    <property type="entry name" value="YbaK/aa-tRNA-synt-asso_dom_sf"/>
</dbReference>
<dbReference type="InterPro" id="IPR007214">
    <property type="entry name" value="YbaK/aa-tRNA-synth-assoc-dom"/>
</dbReference>
<dbReference type="NCBIfam" id="NF006625">
    <property type="entry name" value="PRK09194.1"/>
    <property type="match status" value="1"/>
</dbReference>
<dbReference type="NCBIfam" id="TIGR00409">
    <property type="entry name" value="proS_fam_II"/>
    <property type="match status" value="1"/>
</dbReference>
<dbReference type="PANTHER" id="PTHR42753">
    <property type="entry name" value="MITOCHONDRIAL RIBOSOME PROTEIN L39/PROLYL-TRNA LIGASE FAMILY MEMBER"/>
    <property type="match status" value="1"/>
</dbReference>
<dbReference type="PANTHER" id="PTHR42753:SF2">
    <property type="entry name" value="PROLINE--TRNA LIGASE"/>
    <property type="match status" value="1"/>
</dbReference>
<dbReference type="Pfam" id="PF03129">
    <property type="entry name" value="HGTP_anticodon"/>
    <property type="match status" value="1"/>
</dbReference>
<dbReference type="Pfam" id="PF00587">
    <property type="entry name" value="tRNA-synt_2b"/>
    <property type="match status" value="1"/>
</dbReference>
<dbReference type="Pfam" id="PF04073">
    <property type="entry name" value="tRNA_edit"/>
    <property type="match status" value="1"/>
</dbReference>
<dbReference type="PRINTS" id="PR01046">
    <property type="entry name" value="TRNASYNTHPRO"/>
</dbReference>
<dbReference type="SUPFAM" id="SSF52954">
    <property type="entry name" value="Class II aaRS ABD-related"/>
    <property type="match status" value="1"/>
</dbReference>
<dbReference type="SUPFAM" id="SSF55681">
    <property type="entry name" value="Class II aaRS and biotin synthetases"/>
    <property type="match status" value="1"/>
</dbReference>
<dbReference type="SUPFAM" id="SSF55826">
    <property type="entry name" value="YbaK/ProRS associated domain"/>
    <property type="match status" value="1"/>
</dbReference>
<dbReference type="PROSITE" id="PS50862">
    <property type="entry name" value="AA_TRNA_LIGASE_II"/>
    <property type="match status" value="1"/>
</dbReference>
<accession>Q03FS9</accession>
<protein>
    <recommendedName>
        <fullName evidence="1">Proline--tRNA ligase</fullName>
        <ecNumber evidence="1">6.1.1.15</ecNumber>
    </recommendedName>
    <alternativeName>
        <fullName evidence="1">Prolyl-tRNA synthetase</fullName>
        <shortName evidence="1">ProRS</shortName>
    </alternativeName>
</protein>
<name>SYP_PEDPA</name>
<keyword id="KW-0030">Aminoacyl-tRNA synthetase</keyword>
<keyword id="KW-0067">ATP-binding</keyword>
<keyword id="KW-0963">Cytoplasm</keyword>
<keyword id="KW-0436">Ligase</keyword>
<keyword id="KW-0547">Nucleotide-binding</keyword>
<keyword id="KW-0648">Protein biosynthesis</keyword>
<reference key="1">
    <citation type="journal article" date="2006" name="Proc. Natl. Acad. Sci. U.S.A.">
        <title>Comparative genomics of the lactic acid bacteria.</title>
        <authorList>
            <person name="Makarova K.S."/>
            <person name="Slesarev A."/>
            <person name="Wolf Y.I."/>
            <person name="Sorokin A."/>
            <person name="Mirkin B."/>
            <person name="Koonin E.V."/>
            <person name="Pavlov A."/>
            <person name="Pavlova N."/>
            <person name="Karamychev V."/>
            <person name="Polouchine N."/>
            <person name="Shakhova V."/>
            <person name="Grigoriev I."/>
            <person name="Lou Y."/>
            <person name="Rohksar D."/>
            <person name="Lucas S."/>
            <person name="Huang K."/>
            <person name="Goodstein D.M."/>
            <person name="Hawkins T."/>
            <person name="Plengvidhya V."/>
            <person name="Welker D."/>
            <person name="Hughes J."/>
            <person name="Goh Y."/>
            <person name="Benson A."/>
            <person name="Baldwin K."/>
            <person name="Lee J.-H."/>
            <person name="Diaz-Muniz I."/>
            <person name="Dosti B."/>
            <person name="Smeianov V."/>
            <person name="Wechter W."/>
            <person name="Barabote R."/>
            <person name="Lorca G."/>
            <person name="Altermann E."/>
            <person name="Barrangou R."/>
            <person name="Ganesan B."/>
            <person name="Xie Y."/>
            <person name="Rawsthorne H."/>
            <person name="Tamir D."/>
            <person name="Parker C."/>
            <person name="Breidt F."/>
            <person name="Broadbent J.R."/>
            <person name="Hutkins R."/>
            <person name="O'Sullivan D."/>
            <person name="Steele J."/>
            <person name="Unlu G."/>
            <person name="Saier M.H. Jr."/>
            <person name="Klaenhammer T."/>
            <person name="Richardson P."/>
            <person name="Kozyavkin S."/>
            <person name="Weimer B.C."/>
            <person name="Mills D.A."/>
        </authorList>
    </citation>
    <scope>NUCLEOTIDE SEQUENCE [LARGE SCALE GENOMIC DNA]</scope>
    <source>
        <strain>ATCC 25745 / CCUG 21536 / LMG 10740 / 183-1w</strain>
    </source>
</reference>
<organism>
    <name type="scientific">Pediococcus pentosaceus (strain ATCC 25745 / CCUG 21536 / LMG 10740 / 183-1w)</name>
    <dbReference type="NCBI Taxonomy" id="278197"/>
    <lineage>
        <taxon>Bacteria</taxon>
        <taxon>Bacillati</taxon>
        <taxon>Bacillota</taxon>
        <taxon>Bacilli</taxon>
        <taxon>Lactobacillales</taxon>
        <taxon>Lactobacillaceae</taxon>
        <taxon>Pediococcus</taxon>
    </lineage>
</organism>